<organism>
    <name type="scientific">Streptococcus pyogenes serotype M2 (strain MGAS10270)</name>
    <dbReference type="NCBI Taxonomy" id="370552"/>
    <lineage>
        <taxon>Bacteria</taxon>
        <taxon>Bacillati</taxon>
        <taxon>Bacillota</taxon>
        <taxon>Bacilli</taxon>
        <taxon>Lactobacillales</taxon>
        <taxon>Streptococcaceae</taxon>
        <taxon>Streptococcus</taxon>
    </lineage>
</organism>
<sequence>MTDVSRVLKEARDQGRLTTLDYANLIFDDFMELHGDRHFSDDGAIVGGLAYLAGQPVTVIGIQKGKNLQDNLARNFGQPNPEGYRKALRLMKQAEKFGRPVVTFINTAGAYPGVGAEERGQGEAIAKNLMEMSDLKVPIIAIIIGEGGSGGALALAVADQVWMLENTMYAVLSPEGFASILWKDGSRATEAAELMKITAGELYQMGIVDRIIPEHGYFSSEIVDIIKANLIEQITSLQAKPLDQLLDERYQRFRKY</sequence>
<protein>
    <recommendedName>
        <fullName evidence="1">Acetyl-coenzyme A carboxylase carboxyl transferase subunit alpha</fullName>
        <shortName evidence="1">ACCase subunit alpha</shortName>
        <shortName evidence="1">Acetyl-CoA carboxylase carboxyltransferase subunit alpha</shortName>
        <ecNumber evidence="1">2.1.3.15</ecNumber>
    </recommendedName>
</protein>
<keyword id="KW-0067">ATP-binding</keyword>
<keyword id="KW-0963">Cytoplasm</keyword>
<keyword id="KW-0275">Fatty acid biosynthesis</keyword>
<keyword id="KW-0276">Fatty acid metabolism</keyword>
<keyword id="KW-0444">Lipid biosynthesis</keyword>
<keyword id="KW-0443">Lipid metabolism</keyword>
<keyword id="KW-0547">Nucleotide-binding</keyword>
<keyword id="KW-0808">Transferase</keyword>
<feature type="chain" id="PRO_1000062684" description="Acetyl-coenzyme A carboxylase carboxyl transferase subunit alpha">
    <location>
        <begin position="1"/>
        <end position="256"/>
    </location>
</feature>
<feature type="domain" description="CoA carboxyltransferase C-terminal" evidence="2">
    <location>
        <begin position="1"/>
        <end position="236"/>
    </location>
</feature>
<dbReference type="EC" id="2.1.3.15" evidence="1"/>
<dbReference type="EMBL" id="CP000260">
    <property type="protein sequence ID" value="ABF34616.1"/>
    <property type="molecule type" value="Genomic_DNA"/>
</dbReference>
<dbReference type="SMR" id="Q1JFE3"/>
<dbReference type="KEGG" id="sph:MGAS10270_Spy1551"/>
<dbReference type="HOGENOM" id="CLU_015486_0_2_9"/>
<dbReference type="UniPathway" id="UPA00655">
    <property type="reaction ID" value="UER00711"/>
</dbReference>
<dbReference type="Proteomes" id="UP000002436">
    <property type="component" value="Chromosome"/>
</dbReference>
<dbReference type="GO" id="GO:0009317">
    <property type="term" value="C:acetyl-CoA carboxylase complex"/>
    <property type="evidence" value="ECO:0007669"/>
    <property type="project" value="InterPro"/>
</dbReference>
<dbReference type="GO" id="GO:0003989">
    <property type="term" value="F:acetyl-CoA carboxylase activity"/>
    <property type="evidence" value="ECO:0007669"/>
    <property type="project" value="InterPro"/>
</dbReference>
<dbReference type="GO" id="GO:0005524">
    <property type="term" value="F:ATP binding"/>
    <property type="evidence" value="ECO:0007669"/>
    <property type="project" value="UniProtKB-KW"/>
</dbReference>
<dbReference type="GO" id="GO:0016743">
    <property type="term" value="F:carboxyl- or carbamoyltransferase activity"/>
    <property type="evidence" value="ECO:0007669"/>
    <property type="project" value="UniProtKB-UniRule"/>
</dbReference>
<dbReference type="GO" id="GO:0006633">
    <property type="term" value="P:fatty acid biosynthetic process"/>
    <property type="evidence" value="ECO:0007669"/>
    <property type="project" value="UniProtKB-KW"/>
</dbReference>
<dbReference type="GO" id="GO:2001295">
    <property type="term" value="P:malonyl-CoA biosynthetic process"/>
    <property type="evidence" value="ECO:0007669"/>
    <property type="project" value="UniProtKB-UniRule"/>
</dbReference>
<dbReference type="Gene3D" id="3.90.226.10">
    <property type="entry name" value="2-enoyl-CoA Hydratase, Chain A, domain 1"/>
    <property type="match status" value="1"/>
</dbReference>
<dbReference type="HAMAP" id="MF_00823">
    <property type="entry name" value="AcetylCoA_CT_alpha"/>
    <property type="match status" value="1"/>
</dbReference>
<dbReference type="InterPro" id="IPR001095">
    <property type="entry name" value="Acetyl_CoA_COase_a_su"/>
</dbReference>
<dbReference type="InterPro" id="IPR029045">
    <property type="entry name" value="ClpP/crotonase-like_dom_sf"/>
</dbReference>
<dbReference type="InterPro" id="IPR011763">
    <property type="entry name" value="COA_CT_C"/>
</dbReference>
<dbReference type="NCBIfam" id="TIGR00513">
    <property type="entry name" value="accA"/>
    <property type="match status" value="1"/>
</dbReference>
<dbReference type="NCBIfam" id="NF041504">
    <property type="entry name" value="AccA_sub"/>
    <property type="match status" value="1"/>
</dbReference>
<dbReference type="NCBIfam" id="NF004344">
    <property type="entry name" value="PRK05724.1"/>
    <property type="match status" value="1"/>
</dbReference>
<dbReference type="NCBIfam" id="NF008971">
    <property type="entry name" value="PRK12319.1"/>
    <property type="match status" value="1"/>
</dbReference>
<dbReference type="PANTHER" id="PTHR42853">
    <property type="entry name" value="ACETYL-COENZYME A CARBOXYLASE CARBOXYL TRANSFERASE SUBUNIT ALPHA"/>
    <property type="match status" value="1"/>
</dbReference>
<dbReference type="PANTHER" id="PTHR42853:SF3">
    <property type="entry name" value="ACETYL-COENZYME A CARBOXYLASE CARBOXYL TRANSFERASE SUBUNIT ALPHA, CHLOROPLASTIC"/>
    <property type="match status" value="1"/>
</dbReference>
<dbReference type="Pfam" id="PF03255">
    <property type="entry name" value="ACCA"/>
    <property type="match status" value="1"/>
</dbReference>
<dbReference type="PRINTS" id="PR01069">
    <property type="entry name" value="ACCCTRFRASEA"/>
</dbReference>
<dbReference type="SUPFAM" id="SSF52096">
    <property type="entry name" value="ClpP/crotonase"/>
    <property type="match status" value="1"/>
</dbReference>
<dbReference type="PROSITE" id="PS50989">
    <property type="entry name" value="COA_CT_CTER"/>
    <property type="match status" value="1"/>
</dbReference>
<reference key="1">
    <citation type="journal article" date="2006" name="Proc. Natl. Acad. Sci. U.S.A.">
        <title>Molecular genetic anatomy of inter- and intraserotype variation in the human bacterial pathogen group A Streptococcus.</title>
        <authorList>
            <person name="Beres S.B."/>
            <person name="Richter E.W."/>
            <person name="Nagiec M.J."/>
            <person name="Sumby P."/>
            <person name="Porcella S.F."/>
            <person name="DeLeo F.R."/>
            <person name="Musser J.M."/>
        </authorList>
    </citation>
    <scope>NUCLEOTIDE SEQUENCE [LARGE SCALE GENOMIC DNA]</scope>
    <source>
        <strain>MGAS10270</strain>
    </source>
</reference>
<accession>Q1JFE3</accession>
<name>ACCA_STRPD</name>
<gene>
    <name evidence="1" type="primary">accA</name>
    <name type="ordered locus">MGAS10270_Spy1551</name>
</gene>
<comment type="function">
    <text evidence="1">Component of the acetyl coenzyme A carboxylase (ACC) complex. First, biotin carboxylase catalyzes the carboxylation of biotin on its carrier protein (BCCP) and then the CO(2) group is transferred by the carboxyltransferase to acetyl-CoA to form malonyl-CoA.</text>
</comment>
<comment type="catalytic activity">
    <reaction evidence="1">
        <text>N(6)-carboxybiotinyl-L-lysyl-[protein] + acetyl-CoA = N(6)-biotinyl-L-lysyl-[protein] + malonyl-CoA</text>
        <dbReference type="Rhea" id="RHEA:54728"/>
        <dbReference type="Rhea" id="RHEA-COMP:10505"/>
        <dbReference type="Rhea" id="RHEA-COMP:10506"/>
        <dbReference type="ChEBI" id="CHEBI:57288"/>
        <dbReference type="ChEBI" id="CHEBI:57384"/>
        <dbReference type="ChEBI" id="CHEBI:83144"/>
        <dbReference type="ChEBI" id="CHEBI:83145"/>
        <dbReference type="EC" id="2.1.3.15"/>
    </reaction>
</comment>
<comment type="pathway">
    <text evidence="1">Lipid metabolism; malonyl-CoA biosynthesis; malonyl-CoA from acetyl-CoA: step 1/1.</text>
</comment>
<comment type="subunit">
    <text evidence="1">Acetyl-CoA carboxylase is a heterohexamer composed of biotin carboxyl carrier protein (AccB), biotin carboxylase (AccC) and two subunits each of ACCase subunit alpha (AccA) and ACCase subunit beta (AccD).</text>
</comment>
<comment type="subcellular location">
    <subcellularLocation>
        <location evidence="1">Cytoplasm</location>
    </subcellularLocation>
</comment>
<comment type="similarity">
    <text evidence="1">Belongs to the AccA family.</text>
</comment>
<evidence type="ECO:0000255" key="1">
    <source>
        <dbReference type="HAMAP-Rule" id="MF_00823"/>
    </source>
</evidence>
<evidence type="ECO:0000255" key="2">
    <source>
        <dbReference type="PROSITE-ProRule" id="PRU01137"/>
    </source>
</evidence>
<proteinExistence type="inferred from homology"/>